<feature type="initiator methionine" description="Removed" evidence="1">
    <location>
        <position position="1"/>
    </location>
</feature>
<feature type="chain" id="PRO_0000073785" description="Neurocalcin-delta">
    <location>
        <begin position="2"/>
        <end position="193"/>
    </location>
</feature>
<feature type="domain" description="EF-hand 1" evidence="2">
    <location>
        <begin position="40"/>
        <end position="58"/>
    </location>
</feature>
<feature type="domain" description="EF-hand 2" evidence="2">
    <location>
        <begin position="60"/>
        <end position="95"/>
    </location>
</feature>
<feature type="domain" description="EF-hand 3" evidence="2">
    <location>
        <begin position="96"/>
        <end position="131"/>
    </location>
</feature>
<feature type="domain" description="EF-hand 4" evidence="2">
    <location>
        <begin position="144"/>
        <end position="179"/>
    </location>
</feature>
<feature type="binding site" evidence="2">
    <location>
        <position position="73"/>
    </location>
    <ligand>
        <name>Ca(2+)</name>
        <dbReference type="ChEBI" id="CHEBI:29108"/>
        <label>1</label>
    </ligand>
</feature>
<feature type="binding site" evidence="2">
    <location>
        <position position="75"/>
    </location>
    <ligand>
        <name>Ca(2+)</name>
        <dbReference type="ChEBI" id="CHEBI:29108"/>
        <label>1</label>
    </ligand>
</feature>
<feature type="binding site" evidence="2">
    <location>
        <position position="77"/>
    </location>
    <ligand>
        <name>Ca(2+)</name>
        <dbReference type="ChEBI" id="CHEBI:29108"/>
        <label>1</label>
    </ligand>
</feature>
<feature type="binding site" evidence="2">
    <location>
        <position position="79"/>
    </location>
    <ligand>
        <name>Ca(2+)</name>
        <dbReference type="ChEBI" id="CHEBI:29108"/>
        <label>1</label>
    </ligand>
</feature>
<feature type="binding site" evidence="2">
    <location>
        <position position="84"/>
    </location>
    <ligand>
        <name>Ca(2+)</name>
        <dbReference type="ChEBI" id="CHEBI:29108"/>
        <label>1</label>
    </ligand>
</feature>
<feature type="binding site" evidence="2">
    <location>
        <position position="109"/>
    </location>
    <ligand>
        <name>Ca(2+)</name>
        <dbReference type="ChEBI" id="CHEBI:29108"/>
        <label>2</label>
    </ligand>
</feature>
<feature type="binding site" evidence="2">
    <location>
        <position position="111"/>
    </location>
    <ligand>
        <name>Ca(2+)</name>
        <dbReference type="ChEBI" id="CHEBI:29108"/>
        <label>2</label>
    </ligand>
</feature>
<feature type="binding site" evidence="2">
    <location>
        <position position="113"/>
    </location>
    <ligand>
        <name>Ca(2+)</name>
        <dbReference type="ChEBI" id="CHEBI:29108"/>
        <label>2</label>
    </ligand>
</feature>
<feature type="binding site" evidence="2">
    <location>
        <position position="115"/>
    </location>
    <ligand>
        <name>Ca(2+)</name>
        <dbReference type="ChEBI" id="CHEBI:29108"/>
        <label>2</label>
    </ligand>
</feature>
<feature type="binding site" evidence="2">
    <location>
        <position position="120"/>
    </location>
    <ligand>
        <name>Ca(2+)</name>
        <dbReference type="ChEBI" id="CHEBI:29108"/>
        <label>2</label>
    </ligand>
</feature>
<feature type="binding site" evidence="2">
    <location>
        <position position="157"/>
    </location>
    <ligand>
        <name>Ca(2+)</name>
        <dbReference type="ChEBI" id="CHEBI:29108"/>
        <label>3</label>
    </ligand>
</feature>
<feature type="binding site" evidence="2">
    <location>
        <position position="159"/>
    </location>
    <ligand>
        <name>Ca(2+)</name>
        <dbReference type="ChEBI" id="CHEBI:29108"/>
        <label>3</label>
    </ligand>
</feature>
<feature type="binding site" evidence="2">
    <location>
        <position position="161"/>
    </location>
    <ligand>
        <name>Ca(2+)</name>
        <dbReference type="ChEBI" id="CHEBI:29108"/>
        <label>3</label>
    </ligand>
</feature>
<feature type="binding site" evidence="2">
    <location>
        <position position="163"/>
    </location>
    <ligand>
        <name>Ca(2+)</name>
        <dbReference type="ChEBI" id="CHEBI:29108"/>
        <label>3</label>
    </ligand>
</feature>
<feature type="binding site" evidence="2">
    <location>
        <position position="168"/>
    </location>
    <ligand>
        <name>Ca(2+)</name>
        <dbReference type="ChEBI" id="CHEBI:29108"/>
        <label>3</label>
    </ligand>
</feature>
<feature type="lipid moiety-binding region" description="N-myristoyl glycine" evidence="1">
    <location>
        <position position="2"/>
    </location>
</feature>
<proteinExistence type="evidence at transcript level"/>
<organism>
    <name type="scientific">Taeniopygia guttata</name>
    <name type="common">Zebra finch</name>
    <name type="synonym">Poephila guttata</name>
    <dbReference type="NCBI Taxonomy" id="59729"/>
    <lineage>
        <taxon>Eukaryota</taxon>
        <taxon>Metazoa</taxon>
        <taxon>Chordata</taxon>
        <taxon>Craniata</taxon>
        <taxon>Vertebrata</taxon>
        <taxon>Euteleostomi</taxon>
        <taxon>Archelosauria</taxon>
        <taxon>Archosauria</taxon>
        <taxon>Dinosauria</taxon>
        <taxon>Saurischia</taxon>
        <taxon>Theropoda</taxon>
        <taxon>Coelurosauria</taxon>
        <taxon>Aves</taxon>
        <taxon>Neognathae</taxon>
        <taxon>Neoaves</taxon>
        <taxon>Telluraves</taxon>
        <taxon>Australaves</taxon>
        <taxon>Passeriformes</taxon>
        <taxon>Passeroidea</taxon>
        <taxon>Estrildidae</taxon>
        <taxon>Estrildinae</taxon>
        <taxon>Taeniopygia</taxon>
    </lineage>
</organism>
<comment type="function">
    <text evidence="1">May be involved in the calcium-dependent regulation of rhodopsin phosphorylation. Binds three calcium ions (By similarity).</text>
</comment>
<comment type="similarity">
    <text evidence="3">Belongs to the recoverin family.</text>
</comment>
<gene>
    <name type="primary">NCALD</name>
</gene>
<evidence type="ECO:0000250" key="1"/>
<evidence type="ECO:0000255" key="2">
    <source>
        <dbReference type="PROSITE-ProRule" id="PRU00448"/>
    </source>
</evidence>
<evidence type="ECO:0000305" key="3"/>
<protein>
    <recommendedName>
        <fullName>Neurocalcin-delta</fullName>
    </recommendedName>
</protein>
<reference key="1">
    <citation type="journal article" date="2003" name="J. Neurobiol.">
        <title>Sexually dimorphic neurocalcin expression in the developing zebra finch telencephalon.</title>
        <authorList>
            <person name="Veney S.L."/>
            <person name="Peabody C.T."/>
            <person name="Smith G.W."/>
            <person name="Wade J."/>
        </authorList>
    </citation>
    <scope>NUCLEOTIDE SEQUENCE [MRNA]</scope>
    <source>
        <tissue>Telencephalon</tissue>
    </source>
</reference>
<dbReference type="EMBL" id="AF272896">
    <property type="protein sequence ID" value="AAG09045.1"/>
    <property type="molecule type" value="mRNA"/>
</dbReference>
<dbReference type="RefSeq" id="NP_001041719.1">
    <property type="nucleotide sequence ID" value="NM_001048254.2"/>
</dbReference>
<dbReference type="SMR" id="P62759"/>
<dbReference type="FunCoup" id="P62759">
    <property type="interactions" value="109"/>
</dbReference>
<dbReference type="Ensembl" id="ENSTGUT00000029806.1">
    <property type="protein sequence ID" value="ENSTGUP00000029196.1"/>
    <property type="gene ID" value="ENSTGUG00000022354.1"/>
</dbReference>
<dbReference type="GeneID" id="751583"/>
<dbReference type="KEGG" id="tgu:751583"/>
<dbReference type="CTD" id="83988"/>
<dbReference type="GeneTree" id="ENSGT00940000158862"/>
<dbReference type="InParanoid" id="P62759"/>
<dbReference type="OMA" id="MGCVCMK"/>
<dbReference type="OrthoDB" id="191686at2759"/>
<dbReference type="Proteomes" id="UP000007754">
    <property type="component" value="Chromosome 2"/>
</dbReference>
<dbReference type="GO" id="GO:0003779">
    <property type="term" value="F:actin binding"/>
    <property type="evidence" value="ECO:0007669"/>
    <property type="project" value="TreeGrafter"/>
</dbReference>
<dbReference type="GO" id="GO:0005509">
    <property type="term" value="F:calcium ion binding"/>
    <property type="evidence" value="ECO:0007669"/>
    <property type="project" value="InterPro"/>
</dbReference>
<dbReference type="GO" id="GO:0015631">
    <property type="term" value="F:tubulin binding"/>
    <property type="evidence" value="ECO:0007669"/>
    <property type="project" value="TreeGrafter"/>
</dbReference>
<dbReference type="GO" id="GO:0019722">
    <property type="term" value="P:calcium-mediated signaling"/>
    <property type="evidence" value="ECO:0007669"/>
    <property type="project" value="TreeGrafter"/>
</dbReference>
<dbReference type="CDD" id="cd00051">
    <property type="entry name" value="EFh"/>
    <property type="match status" value="2"/>
</dbReference>
<dbReference type="FunFam" id="1.10.238.10:FF:000009">
    <property type="entry name" value="Visinin-like protein 1"/>
    <property type="match status" value="1"/>
</dbReference>
<dbReference type="Gene3D" id="1.10.238.10">
    <property type="entry name" value="EF-hand"/>
    <property type="match status" value="1"/>
</dbReference>
<dbReference type="InterPro" id="IPR011992">
    <property type="entry name" value="EF-hand-dom_pair"/>
</dbReference>
<dbReference type="InterPro" id="IPR018247">
    <property type="entry name" value="EF_Hand_1_Ca_BS"/>
</dbReference>
<dbReference type="InterPro" id="IPR002048">
    <property type="entry name" value="EF_hand_dom"/>
</dbReference>
<dbReference type="InterPro" id="IPR028846">
    <property type="entry name" value="Recoverin"/>
</dbReference>
<dbReference type="PANTHER" id="PTHR23055">
    <property type="entry name" value="CALCIUM BINDING PROTEINS"/>
    <property type="match status" value="1"/>
</dbReference>
<dbReference type="PANTHER" id="PTHR23055:SF87">
    <property type="entry name" value="NEUROCALCIN-DELTA"/>
    <property type="match status" value="1"/>
</dbReference>
<dbReference type="Pfam" id="PF00036">
    <property type="entry name" value="EF-hand_1"/>
    <property type="match status" value="1"/>
</dbReference>
<dbReference type="Pfam" id="PF13499">
    <property type="entry name" value="EF-hand_7"/>
    <property type="match status" value="1"/>
</dbReference>
<dbReference type="PRINTS" id="PR00450">
    <property type="entry name" value="RECOVERIN"/>
</dbReference>
<dbReference type="SMART" id="SM00054">
    <property type="entry name" value="EFh"/>
    <property type="match status" value="3"/>
</dbReference>
<dbReference type="SUPFAM" id="SSF47473">
    <property type="entry name" value="EF-hand"/>
    <property type="match status" value="1"/>
</dbReference>
<dbReference type="PROSITE" id="PS00018">
    <property type="entry name" value="EF_HAND_1"/>
    <property type="match status" value="3"/>
</dbReference>
<dbReference type="PROSITE" id="PS50222">
    <property type="entry name" value="EF_HAND_2"/>
    <property type="match status" value="4"/>
</dbReference>
<sequence>MGKQNSKLRPEVMQDLLESTDFTEHEIQEWYKGFLRDCPSGHLSMEEFKKIYGNFFPYGDASKFAEHVFRTFDANGDGTIDFREFIIALSVTSRGKLEQKLKWAFSMYDLDGNGYISKSEMLEIVQAIYKMVSSVMKMPEDESTPEKRTEKIFRQMDTNRDGKLSLEEFIRGAKSDPSIVRLLQCDPSSAGQF</sequence>
<name>NCALD_TAEGU</name>
<keyword id="KW-0106">Calcium</keyword>
<keyword id="KW-0449">Lipoprotein</keyword>
<keyword id="KW-0479">Metal-binding</keyword>
<keyword id="KW-0519">Myristate</keyword>
<keyword id="KW-1185">Reference proteome</keyword>
<keyword id="KW-0677">Repeat</keyword>
<accession>P62759</accession>
<accession>O12953</accession>